<proteinExistence type="predicted"/>
<reference key="1">
    <citation type="journal article" date="2003" name="Proc. Natl. Acad. Sci. U.S.A.">
        <title>The complete genome sequence of Mycobacterium bovis.</title>
        <authorList>
            <person name="Garnier T."/>
            <person name="Eiglmeier K."/>
            <person name="Camus J.-C."/>
            <person name="Medina N."/>
            <person name="Mansoor H."/>
            <person name="Pryor M."/>
            <person name="Duthoy S."/>
            <person name="Grondin S."/>
            <person name="Lacroix C."/>
            <person name="Monsempe C."/>
            <person name="Simon S."/>
            <person name="Harris B."/>
            <person name="Atkin R."/>
            <person name="Doggett J."/>
            <person name="Mayes R."/>
            <person name="Keating L."/>
            <person name="Wheeler P.R."/>
            <person name="Parkhill J."/>
            <person name="Barrell B.G."/>
            <person name="Cole S.T."/>
            <person name="Gordon S.V."/>
            <person name="Hewinson R.G."/>
        </authorList>
    </citation>
    <scope>NUCLEOTIDE SEQUENCE [LARGE SCALE GENOMIC DNA]</scope>
    <source>
        <strain>ATCC BAA-935 / AF2122/97</strain>
    </source>
</reference>
<reference key="2">
    <citation type="journal article" date="2017" name="Genome Announc.">
        <title>Updated reference genome sequence and annotation of Mycobacterium bovis AF2122/97.</title>
        <authorList>
            <person name="Malone K.M."/>
            <person name="Farrell D."/>
            <person name="Stuber T.P."/>
            <person name="Schubert O.T."/>
            <person name="Aebersold R."/>
            <person name="Robbe-Austerman S."/>
            <person name="Gordon S.V."/>
        </authorList>
    </citation>
    <scope>NUCLEOTIDE SEQUENCE [LARGE SCALE GENOMIC DNA]</scope>
    <scope>GENOME REANNOTATION</scope>
    <source>
        <strain>ATCC BAA-935 / AF2122/97</strain>
    </source>
</reference>
<feature type="chain" id="PRO_0000104075" description="Uncharacterized protein Mb2666c">
    <location>
        <begin position="1"/>
        <end position="161"/>
    </location>
</feature>
<accession>P65036</accession>
<accession>A0A1R3Y1S1</accession>
<accession>P71932</accession>
<accession>X2BLF5</accession>
<dbReference type="EMBL" id="LT708304">
    <property type="protein sequence ID" value="SIU01284.1"/>
    <property type="molecule type" value="Genomic_DNA"/>
</dbReference>
<dbReference type="RefSeq" id="NP_856312.1">
    <property type="nucleotide sequence ID" value="NC_002945.3"/>
</dbReference>
<dbReference type="RefSeq" id="WP_003413625.1">
    <property type="nucleotide sequence ID" value="NC_002945.4"/>
</dbReference>
<dbReference type="SMR" id="P65036"/>
<dbReference type="KEGG" id="mbo:BQ2027_MB2666C"/>
<dbReference type="PATRIC" id="fig|233413.5.peg.2927"/>
<dbReference type="Proteomes" id="UP000001419">
    <property type="component" value="Chromosome"/>
</dbReference>
<dbReference type="Gene3D" id="1.20.120.520">
    <property type="entry name" value="nmb1532 protein domain like"/>
    <property type="match status" value="1"/>
</dbReference>
<dbReference type="InterPro" id="IPR012312">
    <property type="entry name" value="Hemerythrin-like"/>
</dbReference>
<dbReference type="PANTHER" id="PTHR35585">
    <property type="entry name" value="HHE DOMAIN PROTEIN (AFU_ORTHOLOGUE AFUA_4G00730)"/>
    <property type="match status" value="1"/>
</dbReference>
<dbReference type="PANTHER" id="PTHR35585:SF1">
    <property type="entry name" value="HHE DOMAIN PROTEIN (AFU_ORTHOLOGUE AFUA_4G00730)"/>
    <property type="match status" value="1"/>
</dbReference>
<dbReference type="Pfam" id="PF01814">
    <property type="entry name" value="Hemerythrin"/>
    <property type="match status" value="1"/>
</dbReference>
<sequence>MNAYDVLKRHHTVLKGLGRKVGEAPVNSEERHVLFDEMLIELDIHFRIEDDLYYPALSAAGKPITGTHAEHRQVVDQLATLLRTPQRAPGYEEEWNVFRTVLEAHADVEERDMIPAPTPVHITDAELEELGDKMAARIEQLRGSPLYTLRTKGKADLLKAI</sequence>
<keyword id="KW-1185">Reference proteome</keyword>
<protein>
    <recommendedName>
        <fullName>Uncharacterized protein Mb2666c</fullName>
    </recommendedName>
</protein>
<name>Y2666_MYCBO</name>
<gene>
    <name type="ordered locus">BQ2027_MB2666C</name>
</gene>
<organism>
    <name type="scientific">Mycobacterium bovis (strain ATCC BAA-935 / AF2122/97)</name>
    <dbReference type="NCBI Taxonomy" id="233413"/>
    <lineage>
        <taxon>Bacteria</taxon>
        <taxon>Bacillati</taxon>
        <taxon>Actinomycetota</taxon>
        <taxon>Actinomycetes</taxon>
        <taxon>Mycobacteriales</taxon>
        <taxon>Mycobacteriaceae</taxon>
        <taxon>Mycobacterium</taxon>
        <taxon>Mycobacterium tuberculosis complex</taxon>
    </lineage>
</organism>